<dbReference type="EC" id="3.6.4.13"/>
<dbReference type="EMBL" id="CH445342">
    <property type="protein sequence ID" value="EAT81633.2"/>
    <property type="molecule type" value="Genomic_DNA"/>
</dbReference>
<dbReference type="RefSeq" id="XP_001801383.1">
    <property type="nucleotide sequence ID" value="XM_001801331.1"/>
</dbReference>
<dbReference type="SMR" id="Q0UAT0"/>
<dbReference type="FunCoup" id="Q0UAT0">
    <property type="interactions" value="604"/>
</dbReference>
<dbReference type="STRING" id="321614.Q0UAT0"/>
<dbReference type="EnsemblFungi" id="SNOT_11134">
    <property type="protein sequence ID" value="SNOT_11134"/>
    <property type="gene ID" value="SNOG_11134"/>
</dbReference>
<dbReference type="GeneID" id="5978291"/>
<dbReference type="KEGG" id="pno:SNOG_11134"/>
<dbReference type="VEuPathDB" id="FungiDB:JI435_111340"/>
<dbReference type="eggNOG" id="KOG0328">
    <property type="taxonomic scope" value="Eukaryota"/>
</dbReference>
<dbReference type="HOGENOM" id="CLU_003041_1_0_1"/>
<dbReference type="InParanoid" id="Q0UAT0"/>
<dbReference type="Proteomes" id="UP000001055">
    <property type="component" value="Unassembled WGS sequence"/>
</dbReference>
<dbReference type="GO" id="GO:0071013">
    <property type="term" value="C:catalytic step 2 spliceosome"/>
    <property type="evidence" value="ECO:0000318"/>
    <property type="project" value="GO_Central"/>
</dbReference>
<dbReference type="GO" id="GO:0030874">
    <property type="term" value="C:nucleolar chromatin"/>
    <property type="evidence" value="ECO:0007669"/>
    <property type="project" value="EnsemblFungi"/>
</dbReference>
<dbReference type="GO" id="GO:0005730">
    <property type="term" value="C:nucleolus"/>
    <property type="evidence" value="ECO:0000318"/>
    <property type="project" value="GO_Central"/>
</dbReference>
<dbReference type="GO" id="GO:0005524">
    <property type="term" value="F:ATP binding"/>
    <property type="evidence" value="ECO:0007669"/>
    <property type="project" value="UniProtKB-KW"/>
</dbReference>
<dbReference type="GO" id="GO:0016887">
    <property type="term" value="F:ATP hydrolysis activity"/>
    <property type="evidence" value="ECO:0007669"/>
    <property type="project" value="RHEA"/>
</dbReference>
<dbReference type="GO" id="GO:0003729">
    <property type="term" value="F:mRNA binding"/>
    <property type="evidence" value="ECO:0000318"/>
    <property type="project" value="GO_Central"/>
</dbReference>
<dbReference type="GO" id="GO:0003724">
    <property type="term" value="F:RNA helicase activity"/>
    <property type="evidence" value="ECO:0000318"/>
    <property type="project" value="GO_Central"/>
</dbReference>
<dbReference type="GO" id="GO:0000398">
    <property type="term" value="P:mRNA splicing, via spliceosome"/>
    <property type="evidence" value="ECO:0000318"/>
    <property type="project" value="GO_Central"/>
</dbReference>
<dbReference type="GO" id="GO:0006364">
    <property type="term" value="P:rRNA processing"/>
    <property type="evidence" value="ECO:0007669"/>
    <property type="project" value="UniProtKB-KW"/>
</dbReference>
<dbReference type="CDD" id="cd18787">
    <property type="entry name" value="SF2_C_DEAD"/>
    <property type="match status" value="1"/>
</dbReference>
<dbReference type="FunFam" id="3.40.50.300:FF:000031">
    <property type="entry name" value="Eukaryotic initiation factor 4A-III"/>
    <property type="match status" value="1"/>
</dbReference>
<dbReference type="Gene3D" id="3.40.50.300">
    <property type="entry name" value="P-loop containing nucleotide triphosphate hydrolases"/>
    <property type="match status" value="3"/>
</dbReference>
<dbReference type="InterPro" id="IPR011545">
    <property type="entry name" value="DEAD/DEAH_box_helicase_dom"/>
</dbReference>
<dbReference type="InterPro" id="IPR014001">
    <property type="entry name" value="Helicase_ATP-bd"/>
</dbReference>
<dbReference type="InterPro" id="IPR001650">
    <property type="entry name" value="Helicase_C-like"/>
</dbReference>
<dbReference type="InterPro" id="IPR027417">
    <property type="entry name" value="P-loop_NTPase"/>
</dbReference>
<dbReference type="InterPro" id="IPR000629">
    <property type="entry name" value="RNA-helicase_DEAD-box_CS"/>
</dbReference>
<dbReference type="InterPro" id="IPR014014">
    <property type="entry name" value="RNA_helicase_DEAD_Q_motif"/>
</dbReference>
<dbReference type="PANTHER" id="PTHR47958">
    <property type="entry name" value="ATP-DEPENDENT RNA HELICASE DBP3"/>
    <property type="match status" value="1"/>
</dbReference>
<dbReference type="Pfam" id="PF00270">
    <property type="entry name" value="DEAD"/>
    <property type="match status" value="2"/>
</dbReference>
<dbReference type="Pfam" id="PF00271">
    <property type="entry name" value="Helicase_C"/>
    <property type="match status" value="1"/>
</dbReference>
<dbReference type="SMART" id="SM00487">
    <property type="entry name" value="DEXDc"/>
    <property type="match status" value="1"/>
</dbReference>
<dbReference type="SMART" id="SM00490">
    <property type="entry name" value="HELICc"/>
    <property type="match status" value="1"/>
</dbReference>
<dbReference type="SUPFAM" id="SSF52540">
    <property type="entry name" value="P-loop containing nucleoside triphosphate hydrolases"/>
    <property type="match status" value="1"/>
</dbReference>
<dbReference type="PROSITE" id="PS00039">
    <property type="entry name" value="DEAD_ATP_HELICASE"/>
    <property type="match status" value="1"/>
</dbReference>
<dbReference type="PROSITE" id="PS51192">
    <property type="entry name" value="HELICASE_ATP_BIND_1"/>
    <property type="match status" value="1"/>
</dbReference>
<dbReference type="PROSITE" id="PS51194">
    <property type="entry name" value="HELICASE_CTER"/>
    <property type="match status" value="1"/>
</dbReference>
<dbReference type="PROSITE" id="PS51195">
    <property type="entry name" value="Q_MOTIF"/>
    <property type="match status" value="1"/>
</dbReference>
<gene>
    <name type="primary">FAL1</name>
    <name type="ORF">SNOG_11134</name>
</gene>
<protein>
    <recommendedName>
        <fullName>ATP-dependent RNA helicase FAL1</fullName>
        <ecNumber>3.6.4.13</ecNumber>
    </recommendedName>
</protein>
<feature type="chain" id="PRO_0000282448" description="ATP-dependent RNA helicase FAL1">
    <location>
        <begin position="1"/>
        <end position="374"/>
    </location>
</feature>
<feature type="domain" description="Helicase ATP-binding" evidence="2">
    <location>
        <begin position="56"/>
        <end position="201"/>
    </location>
</feature>
<feature type="domain" description="Helicase C-terminal" evidence="3">
    <location>
        <begin position="212"/>
        <end position="373"/>
    </location>
</feature>
<feature type="short sequence motif" description="Q motif">
    <location>
        <begin position="25"/>
        <end position="53"/>
    </location>
</feature>
<feature type="short sequence motif" description="DEAD box">
    <location>
        <begin position="149"/>
        <end position="152"/>
    </location>
</feature>
<feature type="binding site" evidence="2">
    <location>
        <begin position="69"/>
        <end position="76"/>
    </location>
    <ligand>
        <name>ATP</name>
        <dbReference type="ChEBI" id="CHEBI:30616"/>
    </ligand>
</feature>
<accession>Q0UAT0</accession>
<reference key="1">
    <citation type="journal article" date="2007" name="Plant Cell">
        <title>Dothideomycete-plant interactions illuminated by genome sequencing and EST analysis of the wheat pathogen Stagonospora nodorum.</title>
        <authorList>
            <person name="Hane J.K."/>
            <person name="Lowe R.G.T."/>
            <person name="Solomon P.S."/>
            <person name="Tan K.-C."/>
            <person name="Schoch C.L."/>
            <person name="Spatafora J.W."/>
            <person name="Crous P.W."/>
            <person name="Kodira C.D."/>
            <person name="Birren B.W."/>
            <person name="Galagan J.E."/>
            <person name="Torriani S.F.F."/>
            <person name="McDonald B.A."/>
            <person name="Oliver R.P."/>
        </authorList>
    </citation>
    <scope>NUCLEOTIDE SEQUENCE [LARGE SCALE GENOMIC DNA]</scope>
    <source>
        <strain>SN15 / ATCC MYA-4574 / FGSC 10173</strain>
    </source>
</reference>
<keyword id="KW-0067">ATP-binding</keyword>
<keyword id="KW-0347">Helicase</keyword>
<keyword id="KW-0378">Hydrolase</keyword>
<keyword id="KW-0547">Nucleotide-binding</keyword>
<keyword id="KW-0539">Nucleus</keyword>
<keyword id="KW-0690">Ribosome biogenesis</keyword>
<keyword id="KW-0694">RNA-binding</keyword>
<keyword id="KW-0698">rRNA processing</keyword>
<sequence>MADGIDRNADEKMEFSTSKEVTVAPTFEAMHLKENLLRGIYAYGYESPSAVQSRAIVQVCKGRDTIAQAQSGTGKTATFSISILQSVIMGLGDYMNVQCHACIGGTNVGEDIRKLDYGQHVVSGTPGRVADMIRRRNLRTRNIKMLVLDEADELLNRGFREQIYDVYRYLPPATQVVVVSATLPYDVLEMTTKFMTDPVRILVKRDELTLEGLKQYFIAIEKEEWKFDTLCDLYDTLTITQAVIFCNTRRKVDWLTDKMREANFTVSSMHGDMPQRERDSIMQDFRQANSRVLISTDVWARGIDVQQVSLVINYDLPSNRENYIHRIGRSGRFGRKGVAINFVTQEDVRILRDIELYYSTQIDEMPMNVADLLA</sequence>
<comment type="function">
    <text evidence="1">ATP-dependent RNA helicase involved in 40S ribosomal subunit biogenesis. Required for the processing and cleavage of 35S pre-rRNA at sites A0, A1, and A2, leading to mature 18S rRNA (By similarity).</text>
</comment>
<comment type="catalytic activity">
    <reaction>
        <text>ATP + H2O = ADP + phosphate + H(+)</text>
        <dbReference type="Rhea" id="RHEA:13065"/>
        <dbReference type="ChEBI" id="CHEBI:15377"/>
        <dbReference type="ChEBI" id="CHEBI:15378"/>
        <dbReference type="ChEBI" id="CHEBI:30616"/>
        <dbReference type="ChEBI" id="CHEBI:43474"/>
        <dbReference type="ChEBI" id="CHEBI:456216"/>
        <dbReference type="EC" id="3.6.4.13"/>
    </reaction>
</comment>
<comment type="subcellular location">
    <subcellularLocation>
        <location evidence="1">Nucleus</location>
        <location evidence="1">Nucleolus</location>
    </subcellularLocation>
</comment>
<comment type="domain">
    <text>The Q motif is unique to and characteristic of the DEAD box family of RNA helicases and controls ATP binding and hydrolysis.</text>
</comment>
<comment type="similarity">
    <text evidence="4">Belongs to the DEAD box helicase family. DDX48/FAL1 subfamily.</text>
</comment>
<name>FAL1_PHANO</name>
<organism>
    <name type="scientific">Phaeosphaeria nodorum (strain SN15 / ATCC MYA-4574 / FGSC 10173)</name>
    <name type="common">Glume blotch fungus</name>
    <name type="synonym">Parastagonospora nodorum</name>
    <dbReference type="NCBI Taxonomy" id="321614"/>
    <lineage>
        <taxon>Eukaryota</taxon>
        <taxon>Fungi</taxon>
        <taxon>Dikarya</taxon>
        <taxon>Ascomycota</taxon>
        <taxon>Pezizomycotina</taxon>
        <taxon>Dothideomycetes</taxon>
        <taxon>Pleosporomycetidae</taxon>
        <taxon>Pleosporales</taxon>
        <taxon>Pleosporineae</taxon>
        <taxon>Phaeosphaeriaceae</taxon>
        <taxon>Parastagonospora</taxon>
    </lineage>
</organism>
<evidence type="ECO:0000250" key="1"/>
<evidence type="ECO:0000255" key="2">
    <source>
        <dbReference type="PROSITE-ProRule" id="PRU00541"/>
    </source>
</evidence>
<evidence type="ECO:0000255" key="3">
    <source>
        <dbReference type="PROSITE-ProRule" id="PRU00542"/>
    </source>
</evidence>
<evidence type="ECO:0000305" key="4"/>
<proteinExistence type="inferred from homology"/>